<gene>
    <name type="primary">Ssr4</name>
</gene>
<reference key="1">
    <citation type="journal article" date="1993" name="Eur. J. Biochem.">
        <title>A tetrameric complex of membrane proteins in the endoplasmic reticulum.</title>
        <authorList>
            <person name="Hartmann E."/>
            <person name="Goerlich D."/>
            <person name="Kostka S."/>
            <person name="Otto A."/>
            <person name="Kraft R."/>
            <person name="Knespel S."/>
            <person name="Buerger E."/>
            <person name="Rapoport T.A."/>
            <person name="Prehn S."/>
        </authorList>
    </citation>
    <scope>NUCLEOTIDE SEQUENCE [MRNA]</scope>
    <source>
        <tissue>Liver</tissue>
    </source>
</reference>
<reference key="2">
    <citation type="journal article" date="2004" name="Genome Res.">
        <title>The status, quality, and expansion of the NIH full-length cDNA project: the Mammalian Gene Collection (MGC).</title>
        <authorList>
            <consortium name="The MGC Project Team"/>
        </authorList>
    </citation>
    <scope>NUCLEOTIDE SEQUENCE [LARGE SCALE MRNA]</scope>
    <source>
        <tissue>Pituitary</tissue>
    </source>
</reference>
<dbReference type="EMBL" id="Z19087">
    <property type="protein sequence ID" value="CAA79513.1"/>
    <property type="molecule type" value="mRNA"/>
</dbReference>
<dbReference type="EMBL" id="BC058482">
    <property type="protein sequence ID" value="AAH58482.1"/>
    <property type="molecule type" value="mRNA"/>
</dbReference>
<dbReference type="PIR" id="S33295">
    <property type="entry name" value="S33295"/>
</dbReference>
<dbReference type="RefSeq" id="NP_058895.1">
    <property type="nucleotide sequence ID" value="NM_017199.1"/>
</dbReference>
<dbReference type="SMR" id="Q07984"/>
<dbReference type="BioGRID" id="248082">
    <property type="interactions" value="1"/>
</dbReference>
<dbReference type="FunCoup" id="Q07984">
    <property type="interactions" value="2317"/>
</dbReference>
<dbReference type="IntAct" id="Q07984">
    <property type="interactions" value="2"/>
</dbReference>
<dbReference type="STRING" id="10116.ENSRNOP00000070206"/>
<dbReference type="PhosphoSitePlus" id="Q07984"/>
<dbReference type="jPOST" id="Q07984"/>
<dbReference type="PaxDb" id="10116-ENSRNOP00000063309"/>
<dbReference type="GeneID" id="29435"/>
<dbReference type="KEGG" id="rno:29435"/>
<dbReference type="AGR" id="RGD:62034"/>
<dbReference type="CTD" id="6748"/>
<dbReference type="RGD" id="62034">
    <property type="gene designation" value="Ssr4"/>
</dbReference>
<dbReference type="VEuPathDB" id="HostDB:ENSRNOG00000053172"/>
<dbReference type="eggNOG" id="KOG4088">
    <property type="taxonomic scope" value="Eukaryota"/>
</dbReference>
<dbReference type="HOGENOM" id="CLU_100264_0_1_1"/>
<dbReference type="InParanoid" id="Q07984"/>
<dbReference type="OrthoDB" id="56506at9989"/>
<dbReference type="PRO" id="PR:Q07984"/>
<dbReference type="Proteomes" id="UP000002494">
    <property type="component" value="Chromosome X"/>
</dbReference>
<dbReference type="Bgee" id="ENSRNOG00000053172">
    <property type="expression patterns" value="Expressed in pancreas and 20 other cell types or tissues"/>
</dbReference>
<dbReference type="GO" id="GO:0012505">
    <property type="term" value="C:endomembrane system"/>
    <property type="evidence" value="ECO:0000318"/>
    <property type="project" value="GO_Central"/>
</dbReference>
<dbReference type="GO" id="GO:0005784">
    <property type="term" value="C:Sec61 translocon complex"/>
    <property type="evidence" value="ECO:0000314"/>
    <property type="project" value="RGD"/>
</dbReference>
<dbReference type="InterPro" id="IPR008855">
    <property type="entry name" value="TRAP-delta"/>
</dbReference>
<dbReference type="PANTHER" id="PTHR12731:SF1">
    <property type="entry name" value="TRANSLOCON-ASSOCIATED PROTEIN SUBUNIT DELTA"/>
    <property type="match status" value="1"/>
</dbReference>
<dbReference type="PANTHER" id="PTHR12731">
    <property type="entry name" value="TRANSLOCON-ASSOCIATED PROTEIN, DELTA SUBUNIT"/>
    <property type="match status" value="1"/>
</dbReference>
<dbReference type="Pfam" id="PF05404">
    <property type="entry name" value="TRAP-delta"/>
    <property type="match status" value="1"/>
</dbReference>
<name>SSRD_RAT</name>
<sequence length="173" mass="18980">MAAMASFGALALLLLSGLSCCSAEACLEPQITPSYYTTSDAVISTETVFIVEISLTCKNRVQNMALYADVSGKQFPVTRGQDVGRYQVSWSLEHKSAHAGTYEVRFFDEESYSLLRKAQRNNEDVSIIPPLFTVSVDHRGTWNGPWVSTEVLAAAIGIVIYYLAFSAKSHIQA</sequence>
<feature type="signal peptide" evidence="3">
    <location>
        <begin position="1"/>
        <end position="23"/>
    </location>
</feature>
<feature type="chain" id="PRO_0000033295" description="Translocon-associated protein subunit delta">
    <location>
        <begin position="24"/>
        <end position="173"/>
    </location>
</feature>
<feature type="topological domain" description="Lumenal" evidence="3">
    <location>
        <begin position="24"/>
        <end position="144"/>
    </location>
</feature>
<feature type="transmembrane region" description="Helical" evidence="3">
    <location>
        <begin position="145"/>
        <end position="165"/>
    </location>
</feature>
<feature type="topological domain" description="Cytoplasmic" evidence="3">
    <location>
        <begin position="166"/>
        <end position="173"/>
    </location>
</feature>
<feature type="disulfide bond" evidence="1">
    <location>
        <begin position="26"/>
        <end position="57"/>
    </location>
</feature>
<feature type="cross-link" description="Glycyl lysine isopeptide (Lys-Gly) (interchain with G-Cter in ubiquitin)" evidence="2">
    <location>
        <position position="73"/>
    </location>
</feature>
<comment type="function">
    <text>TRAP proteins are part of a complex whose function is to bind calcium to the ER membrane and thereby regulate the retention of ER resident proteins.</text>
</comment>
<comment type="subunit">
    <text>Heterotetramer of TRAP-alpha, TRAP-beta, TRAP-delta and TRAP-gamma.</text>
</comment>
<comment type="subcellular location">
    <subcellularLocation>
        <location>Endoplasmic reticulum membrane</location>
        <topology>Single-pass type I membrane protein</topology>
    </subcellularLocation>
</comment>
<comment type="similarity">
    <text evidence="4">Belongs to the TRAP-delta family.</text>
</comment>
<protein>
    <recommendedName>
        <fullName>Translocon-associated protein subunit delta</fullName>
        <shortName>TRAP-delta</shortName>
    </recommendedName>
    <alternativeName>
        <fullName>Signal sequence receptor subunit delta</fullName>
        <shortName>SSR-delta</shortName>
    </alternativeName>
</protein>
<keyword id="KW-1015">Disulfide bond</keyword>
<keyword id="KW-0256">Endoplasmic reticulum</keyword>
<keyword id="KW-1017">Isopeptide bond</keyword>
<keyword id="KW-0472">Membrane</keyword>
<keyword id="KW-1185">Reference proteome</keyword>
<keyword id="KW-0732">Signal</keyword>
<keyword id="KW-0812">Transmembrane</keyword>
<keyword id="KW-1133">Transmembrane helix</keyword>
<keyword id="KW-0832">Ubl conjugation</keyword>
<accession>Q07984</accession>
<proteinExistence type="evidence at transcript level"/>
<evidence type="ECO:0000250" key="1"/>
<evidence type="ECO:0000250" key="2">
    <source>
        <dbReference type="UniProtKB" id="P51571"/>
    </source>
</evidence>
<evidence type="ECO:0000255" key="3"/>
<evidence type="ECO:0000305" key="4"/>
<organism>
    <name type="scientific">Rattus norvegicus</name>
    <name type="common">Rat</name>
    <dbReference type="NCBI Taxonomy" id="10116"/>
    <lineage>
        <taxon>Eukaryota</taxon>
        <taxon>Metazoa</taxon>
        <taxon>Chordata</taxon>
        <taxon>Craniata</taxon>
        <taxon>Vertebrata</taxon>
        <taxon>Euteleostomi</taxon>
        <taxon>Mammalia</taxon>
        <taxon>Eutheria</taxon>
        <taxon>Euarchontoglires</taxon>
        <taxon>Glires</taxon>
        <taxon>Rodentia</taxon>
        <taxon>Myomorpha</taxon>
        <taxon>Muroidea</taxon>
        <taxon>Muridae</taxon>
        <taxon>Murinae</taxon>
        <taxon>Rattus</taxon>
    </lineage>
</organism>